<keyword id="KW-0002">3D-structure</keyword>
<keyword id="KW-0963">Cytoplasm</keyword>
<keyword id="KW-0378">Hydrolase</keyword>
<keyword id="KW-1185">Reference proteome</keyword>
<keyword id="KW-0694">RNA-binding</keyword>
<keyword id="KW-0820">tRNA-binding</keyword>
<proteinExistence type="evidence at protein level"/>
<evidence type="ECO:0000255" key="1">
    <source>
        <dbReference type="HAMAP-Rule" id="MF_00518"/>
    </source>
</evidence>
<evidence type="ECO:0000269" key="2">
    <source>
    </source>
</evidence>
<evidence type="ECO:0000303" key="3">
    <source>
    </source>
</evidence>
<evidence type="ECO:0000305" key="4"/>
<evidence type="ECO:0000305" key="5">
    <source>
    </source>
</evidence>
<evidence type="ECO:0007829" key="6">
    <source>
        <dbReference type="PDB" id="1J7G"/>
    </source>
</evidence>
<organism>
    <name type="scientific">Haemophilus influenzae (strain ATCC 51907 / DSM 11121 / KW20 / Rd)</name>
    <dbReference type="NCBI Taxonomy" id="71421"/>
    <lineage>
        <taxon>Bacteria</taxon>
        <taxon>Pseudomonadati</taxon>
        <taxon>Pseudomonadota</taxon>
        <taxon>Gammaproteobacteria</taxon>
        <taxon>Pasteurellales</taxon>
        <taxon>Pasteurellaceae</taxon>
        <taxon>Haemophilus</taxon>
    </lineage>
</organism>
<comment type="function">
    <text evidence="1">An aminoacyl-tRNA editing enzyme that deacylates mischarged D-aminoacyl-tRNAs. Also deacylates mischarged glycyl-tRNA(Ala), protecting cells against glycine mischarging by AlaRS. Acts via tRNA-based rather than protein-based catalysis; rejects L-amino acids rather than detecting D-amino acids in the active site. By recycling D-aminoacyl-tRNA to D-amino acids and free tRNA molecules, this enzyme counteracts the toxicity associated with the formation of D-aminoacyl-tRNA entities in vivo and helps enforce protein L-homochirality.</text>
</comment>
<comment type="catalytic activity">
    <reaction evidence="1">
        <text>glycyl-tRNA(Ala) + H2O = tRNA(Ala) + glycine + H(+)</text>
        <dbReference type="Rhea" id="RHEA:53744"/>
        <dbReference type="Rhea" id="RHEA-COMP:9657"/>
        <dbReference type="Rhea" id="RHEA-COMP:13640"/>
        <dbReference type="ChEBI" id="CHEBI:15377"/>
        <dbReference type="ChEBI" id="CHEBI:15378"/>
        <dbReference type="ChEBI" id="CHEBI:57305"/>
        <dbReference type="ChEBI" id="CHEBI:78442"/>
        <dbReference type="ChEBI" id="CHEBI:78522"/>
        <dbReference type="EC" id="3.1.1.96"/>
    </reaction>
</comment>
<comment type="catalytic activity">
    <reaction evidence="1">
        <text>a D-aminoacyl-tRNA + H2O = a tRNA + a D-alpha-amino acid + H(+)</text>
        <dbReference type="Rhea" id="RHEA:13953"/>
        <dbReference type="Rhea" id="RHEA-COMP:10123"/>
        <dbReference type="Rhea" id="RHEA-COMP:10124"/>
        <dbReference type="ChEBI" id="CHEBI:15377"/>
        <dbReference type="ChEBI" id="CHEBI:15378"/>
        <dbReference type="ChEBI" id="CHEBI:59871"/>
        <dbReference type="ChEBI" id="CHEBI:78442"/>
        <dbReference type="ChEBI" id="CHEBI:79333"/>
        <dbReference type="EC" id="3.1.1.96"/>
    </reaction>
</comment>
<comment type="subunit">
    <text evidence="1 2">Homodimer.</text>
</comment>
<comment type="subcellular location">
    <subcellularLocation>
        <location evidence="1 4">Cytoplasm</location>
    </subcellularLocation>
</comment>
<comment type="domain">
    <text evidence="1">A Gly-cisPro motif from one monomer fits into the active site of the other monomer to allow specific chiral rejection of L-amino acids.</text>
</comment>
<comment type="similarity">
    <text evidence="1 4">Belongs to the DTD family.</text>
</comment>
<comment type="caution">
    <text evidence="5">Initially the conserved reside Thr-80 was thought to be a nucleophile (PubMed:12571243); mutagenesis in E.coli and P.falciparum indicates it is not.</text>
</comment>
<gene>
    <name evidence="1" type="primary">dtd</name>
    <name type="ordered locus">HI_0670</name>
</gene>
<accession>P44814</accession>
<sequence>MIALIQRVSQAKVDVKGETIGKIGKGLLVLLGVEKEDNREKADKLAEKVLNYRIFSDENDKMNLNVQQAQGELLIVSQFTLAADTQKGLRPSFSKGASPALANELYEYFIQKCAEKLPVSTGQFAADMQVSLTNDGPVTFWLNV</sequence>
<name>DTD_HAEIN</name>
<protein>
    <recommendedName>
        <fullName evidence="1">D-aminoacyl-tRNA deacylase</fullName>
        <shortName evidence="1">DTD</shortName>
        <ecNumber evidence="1">3.1.1.96</ecNumber>
    </recommendedName>
    <alternativeName>
        <fullName evidence="3">D-tyrosyl-tRNA(Tyr) deacylase</fullName>
    </alternativeName>
    <alternativeName>
        <fullName evidence="1">Gly-tRNA(Ala) deacylase</fullName>
    </alternativeName>
</protein>
<reference key="1">
    <citation type="journal article" date="1995" name="Science">
        <title>Whole-genome random sequencing and assembly of Haemophilus influenzae Rd.</title>
        <authorList>
            <person name="Fleischmann R.D."/>
            <person name="Adams M.D."/>
            <person name="White O."/>
            <person name="Clayton R.A."/>
            <person name="Kirkness E.F."/>
            <person name="Kerlavage A.R."/>
            <person name="Bult C.J."/>
            <person name="Tomb J.-F."/>
            <person name="Dougherty B.A."/>
            <person name="Merrick J.M."/>
            <person name="McKenney K."/>
            <person name="Sutton G.G."/>
            <person name="FitzHugh W."/>
            <person name="Fields C.A."/>
            <person name="Gocayne J.D."/>
            <person name="Scott J.D."/>
            <person name="Shirley R."/>
            <person name="Liu L.-I."/>
            <person name="Glodek A."/>
            <person name="Kelley J.M."/>
            <person name="Weidman J.F."/>
            <person name="Phillips C.A."/>
            <person name="Spriggs T."/>
            <person name="Hedblom E."/>
            <person name="Cotton M.D."/>
            <person name="Utterback T.R."/>
            <person name="Hanna M.C."/>
            <person name="Nguyen D.T."/>
            <person name="Saudek D.M."/>
            <person name="Brandon R.C."/>
            <person name="Fine L.D."/>
            <person name="Fritchman J.L."/>
            <person name="Fuhrmann J.L."/>
            <person name="Geoghagen N.S.M."/>
            <person name="Gnehm C.L."/>
            <person name="McDonald L.A."/>
            <person name="Small K.V."/>
            <person name="Fraser C.M."/>
            <person name="Smith H.O."/>
            <person name="Venter J.C."/>
        </authorList>
    </citation>
    <scope>NUCLEOTIDE SEQUENCE [LARGE SCALE GENOMIC DNA]</scope>
    <source>
        <strain>ATCC 51907 / DSM 11121 / KW20 / Rd</strain>
    </source>
</reference>
<reference key="2">
    <citation type="journal article" date="2003" name="J. Biol. Chem.">
        <title>A catalytic mechanism for D-Tyr-tRNATyr deacylase based on the crystal structure of Hemophilus influenzae HI0670.</title>
        <authorList>
            <person name="Lim K."/>
            <person name="Tempczyk A."/>
            <person name="Bonander N."/>
            <person name="Toedt J."/>
            <person name="Howard A."/>
            <person name="Eisenstein E."/>
            <person name="Herzberg O."/>
        </authorList>
    </citation>
    <scope>X-RAY CRYSTALLOGRAPHY (1.64 ANGSTROMS)</scope>
    <scope>SUBUNIT</scope>
</reference>
<dbReference type="EC" id="3.1.1.96" evidence="1"/>
<dbReference type="EMBL" id="L42023">
    <property type="protein sequence ID" value="AAC22330.1"/>
    <property type="molecule type" value="Genomic_DNA"/>
</dbReference>
<dbReference type="PIR" id="E64156">
    <property type="entry name" value="E64156"/>
</dbReference>
<dbReference type="RefSeq" id="NP_438830.1">
    <property type="nucleotide sequence ID" value="NC_000907.1"/>
</dbReference>
<dbReference type="PDB" id="1J7G">
    <property type="method" value="X-ray"/>
    <property type="resolution" value="1.64 A"/>
    <property type="chains" value="A=1-144"/>
</dbReference>
<dbReference type="PDBsum" id="1J7G"/>
<dbReference type="SMR" id="P44814"/>
<dbReference type="STRING" id="71421.HI_0670"/>
<dbReference type="EnsemblBacteria" id="AAC22330">
    <property type="protein sequence ID" value="AAC22330"/>
    <property type="gene ID" value="HI_0670"/>
</dbReference>
<dbReference type="KEGG" id="hin:HI_0670"/>
<dbReference type="PATRIC" id="fig|71421.8.peg.700"/>
<dbReference type="eggNOG" id="COG1490">
    <property type="taxonomic scope" value="Bacteria"/>
</dbReference>
<dbReference type="HOGENOM" id="CLU_076901_1_1_6"/>
<dbReference type="OrthoDB" id="9801395at2"/>
<dbReference type="PhylomeDB" id="P44814"/>
<dbReference type="BioCyc" id="HINF71421:G1GJ1-705-MONOMER"/>
<dbReference type="BRENDA" id="3.1.1.96">
    <property type="organism ID" value="2529"/>
</dbReference>
<dbReference type="EvolutionaryTrace" id="P44814"/>
<dbReference type="Proteomes" id="UP000000579">
    <property type="component" value="Chromosome"/>
</dbReference>
<dbReference type="GO" id="GO:0005737">
    <property type="term" value="C:cytoplasm"/>
    <property type="evidence" value="ECO:0000318"/>
    <property type="project" value="GO_Central"/>
</dbReference>
<dbReference type="GO" id="GO:0051500">
    <property type="term" value="F:D-tyrosyl-tRNA(Tyr) deacylase activity"/>
    <property type="evidence" value="ECO:0000318"/>
    <property type="project" value="GO_Central"/>
</dbReference>
<dbReference type="GO" id="GO:0106026">
    <property type="term" value="F:Gly-tRNA(Ala) deacylase activity"/>
    <property type="evidence" value="ECO:0007669"/>
    <property type="project" value="UniProtKB-UniRule"/>
</dbReference>
<dbReference type="GO" id="GO:0043908">
    <property type="term" value="F:Ser(Gly)-tRNA(Ala) hydrolase activity"/>
    <property type="evidence" value="ECO:0007669"/>
    <property type="project" value="UniProtKB-UniRule"/>
</dbReference>
<dbReference type="GO" id="GO:0000049">
    <property type="term" value="F:tRNA binding"/>
    <property type="evidence" value="ECO:0007669"/>
    <property type="project" value="UniProtKB-UniRule"/>
</dbReference>
<dbReference type="GO" id="GO:0019478">
    <property type="term" value="P:D-amino acid catabolic process"/>
    <property type="evidence" value="ECO:0007669"/>
    <property type="project" value="UniProtKB-UniRule"/>
</dbReference>
<dbReference type="GO" id="GO:0006399">
    <property type="term" value="P:tRNA metabolic process"/>
    <property type="evidence" value="ECO:0000318"/>
    <property type="project" value="GO_Central"/>
</dbReference>
<dbReference type="CDD" id="cd00563">
    <property type="entry name" value="Dtyr_deacylase"/>
    <property type="match status" value="1"/>
</dbReference>
<dbReference type="FunFam" id="3.50.80.10:FF:000001">
    <property type="entry name" value="D-aminoacyl-tRNA deacylase"/>
    <property type="match status" value="1"/>
</dbReference>
<dbReference type="Gene3D" id="3.50.80.10">
    <property type="entry name" value="D-tyrosyl-tRNA(Tyr) deacylase"/>
    <property type="match status" value="1"/>
</dbReference>
<dbReference type="HAMAP" id="MF_00518">
    <property type="entry name" value="Deacylase_Dtd"/>
    <property type="match status" value="1"/>
</dbReference>
<dbReference type="InterPro" id="IPR003732">
    <property type="entry name" value="Daa-tRNA_deacyls_DTD"/>
</dbReference>
<dbReference type="InterPro" id="IPR023509">
    <property type="entry name" value="DTD-like_sf"/>
</dbReference>
<dbReference type="NCBIfam" id="TIGR00256">
    <property type="entry name" value="D-aminoacyl-tRNA deacylase"/>
    <property type="match status" value="1"/>
</dbReference>
<dbReference type="PANTHER" id="PTHR10472:SF5">
    <property type="entry name" value="D-AMINOACYL-TRNA DEACYLASE 1"/>
    <property type="match status" value="1"/>
</dbReference>
<dbReference type="PANTHER" id="PTHR10472">
    <property type="entry name" value="D-TYROSYL-TRNA TYR DEACYLASE"/>
    <property type="match status" value="1"/>
</dbReference>
<dbReference type="Pfam" id="PF02580">
    <property type="entry name" value="Tyr_Deacylase"/>
    <property type="match status" value="1"/>
</dbReference>
<dbReference type="SUPFAM" id="SSF69500">
    <property type="entry name" value="DTD-like"/>
    <property type="match status" value="1"/>
</dbReference>
<feature type="chain" id="PRO_0000164546" description="D-aminoacyl-tRNA deacylase">
    <location>
        <begin position="1"/>
        <end position="144"/>
    </location>
</feature>
<feature type="short sequence motif" description="Gly-cisPro motif, important for rejection of L-amino acids" evidence="1">
    <location>
        <begin position="136"/>
        <end position="137"/>
    </location>
</feature>
<feature type="strand" evidence="6">
    <location>
        <begin position="2"/>
        <end position="15"/>
    </location>
</feature>
<feature type="strand" evidence="6">
    <location>
        <begin position="18"/>
        <end position="32"/>
    </location>
</feature>
<feature type="helix" evidence="6">
    <location>
        <begin position="39"/>
        <end position="51"/>
    </location>
</feature>
<feature type="strand" evidence="6">
    <location>
        <begin position="62"/>
        <end position="64"/>
    </location>
</feature>
<feature type="turn" evidence="6">
    <location>
        <begin position="66"/>
        <end position="70"/>
    </location>
</feature>
<feature type="strand" evidence="6">
    <location>
        <begin position="72"/>
        <end position="77"/>
    </location>
</feature>
<feature type="helix" evidence="6">
    <location>
        <begin position="79"/>
        <end position="82"/>
    </location>
</feature>
<feature type="helix" evidence="6">
    <location>
        <begin position="99"/>
        <end position="114"/>
    </location>
</feature>
<feature type="strand" evidence="6">
    <location>
        <begin position="119"/>
        <end position="121"/>
    </location>
</feature>
<feature type="strand" evidence="6">
    <location>
        <begin position="129"/>
        <end position="143"/>
    </location>
</feature>